<reference key="1">
    <citation type="journal article" date="1993" name="Mol. Cell. Endocrinol.">
        <title>Molecular cloning and expression of the ovine testicular follicle stimulating hormone receptor.</title>
        <authorList>
            <person name="Yarney T.A."/>
            <person name="Sairam M.R."/>
            <person name="Khan H."/>
            <person name="Ravindranath N."/>
            <person name="Payne S."/>
            <person name="Seidah N.G."/>
        </authorList>
    </citation>
    <scope>NUCLEOTIDE SEQUENCE [MRNA] (ISOFORM FSH-R1)</scope>
    <source>
        <tissue>Testis</tissue>
    </source>
</reference>
<reference key="2">
    <citation type="journal article" date="1993" name="Biochem. Biophys. Res. Commun.">
        <title>Cloning of alternately spliced mRNA transcripts coding for variants of ovine testicular follitropin receptor lacking the G protein coupling domains.</title>
        <authorList>
            <person name="Khan H."/>
            <person name="Yarney T.A."/>
            <person name="Sairam M.R."/>
        </authorList>
    </citation>
    <scope>NUCLEOTIDE SEQUENCE [MRNA] (ISOFORMS FSH-R4 AND FSH-R3)</scope>
    <source>
        <strain>Dorset-Leicester-Suffolk 1</strain>
        <tissue>Testis</tissue>
    </source>
</reference>
<reference key="3">
    <citation type="journal article" date="1997" name="Mol. Reprod. Dev.">
        <title>Molecular cloning, structure, and expression of a testicular follitropin receptor with selective alteration in the carboxy terminus that affects signaling function.</title>
        <authorList>
            <person name="Yarney T.A."/>
            <person name="Jiang L."/>
            <person name="Khan H."/>
            <person name="MacDonald E.A."/>
            <person name="Laird D.W."/>
            <person name="Sairam M.R."/>
        </authorList>
    </citation>
    <scope>NUCLEOTIDE SEQUENCE [MRNA] (ISOFORM FSH-R2)</scope>
    <scope>SUBCELLULAR LOCATION (ISOFORMS FSH-R1 AND FSH-R2)</scope>
    <scope>FUNCTION (ISOFORMS FSH-R1 AND FSH-R2)</scope>
    <source>
        <strain>Dorset-Leicester-Suffolk 1</strain>
        <tissue>Testis</tissue>
    </source>
</reference>
<reference key="4">
    <citation type="journal article" date="1999" name="Mol. Cell Biol. Res. Commun.">
        <title>Structural features and expression of an alternatively spliced growth factor type I receptor for follitropin signaling in the developing ovary.</title>
        <authorList>
            <person name="Babu P.S."/>
            <person name="Jiang L."/>
            <person name="Sairam A.M."/>
            <person name="Touyz R.M."/>
            <person name="Sairam M.R."/>
        </authorList>
    </citation>
    <scope>NUCLEOTIDE SEQUENCE (ISOFORM FSH-R3)</scope>
    <scope>SUBCELLULAR LOCATION (ISOFORM FSH-R3)</scope>
    <scope>FUNCTION (ISOFORM FSH-R3)</scope>
    <source>
        <strain>Dorset-Leicester-Suffolk 1</strain>
        <tissue>Ovary</tissue>
    </source>
</reference>
<reference key="5">
    <citation type="journal article" date="1997" name="Mol. Reprod. Dev.">
        <title>Characterization of the 5' flanking region and potential control elements of the ovine follitropin receptor gene.</title>
        <authorList>
            <person name="Sairam M.R."/>
            <person name="Subbarayan V.S.R."/>
        </authorList>
    </citation>
    <scope>NUCLEOTIDE SEQUENCE [GENOMIC DNA] OF 1-51</scope>
</reference>
<evidence type="ECO:0000250" key="1"/>
<evidence type="ECO:0000250" key="2">
    <source>
        <dbReference type="UniProtKB" id="P20395"/>
    </source>
</evidence>
<evidence type="ECO:0000250" key="3">
    <source>
        <dbReference type="UniProtKB" id="P23945"/>
    </source>
</evidence>
<evidence type="ECO:0000255" key="4"/>
<evidence type="ECO:0000255" key="5">
    <source>
        <dbReference type="PROSITE-ProRule" id="PRU00521"/>
    </source>
</evidence>
<evidence type="ECO:0000269" key="6">
    <source>
    </source>
</evidence>
<evidence type="ECO:0000269" key="7">
    <source>
    </source>
</evidence>
<evidence type="ECO:0000303" key="8">
    <source>
    </source>
</evidence>
<evidence type="ECO:0000303" key="9">
    <source>
    </source>
</evidence>
<evidence type="ECO:0000305" key="10">
    <source>
    </source>
</evidence>
<comment type="function">
    <text evidence="3 6 7">G protein-coupled receptor for follitropin, the follicle-stimulating hormone. The activity of isoform FSH-R1 is mediated by G proteins which activate adenylate cyclase (PubMed:10527886, PubMed:9364440). Isoform FSH-R2 and isoform FSH-R3 also bind FSH, but this does not result in activation of adenylate cyclase (PubMed:10527886, PubMed:9364440). Isoform FSH-R3 may be involved in calcium signaling (PubMed:10527886). Through cAMP production activates the downstream PI3K-AKT and ERK1/ERK2 signaling pathways (By similarity).</text>
</comment>
<comment type="subunit">
    <text evidence="2 3">Homotrimer. Functions as a homotrimer binding the FSH hormone heterodimer composed of CGA and FSHB (By similarity). Interacts with ARRB2 (By similarity). Interacts with APPL2; interaction is independent of follicle stimulating hormone stimulation (By similarity).</text>
</comment>
<comment type="subcellular location">
    <molecule>Isoform FSH-R1</molecule>
    <subcellularLocation>
        <location>Cell membrane</location>
        <topology evidence="7">Multi-pass membrane protein</topology>
    </subcellularLocation>
</comment>
<comment type="subcellular location">
    <molecule>Isoform FSH-R2</molecule>
    <subcellularLocation>
        <location>Cell membrane</location>
        <topology evidence="7">Multi-pass membrane protein</topology>
    </subcellularLocation>
</comment>
<comment type="subcellular location">
    <molecule>Isoform FSH-R3</molecule>
    <subcellularLocation>
        <location evidence="10">Cell membrane</location>
        <topology evidence="10">Single-pass membrane protein</topology>
    </subcellularLocation>
</comment>
<comment type="alternative products">
    <event type="alternative splicing"/>
    <isoform>
        <id>P35379-1</id>
        <name>FSH-R1</name>
        <sequence type="displayed"/>
    </isoform>
    <isoform>
        <id>P35379-2</id>
        <name>FSH-R2</name>
        <sequence type="described" ref="VSP_001959 VSP_001960"/>
    </isoform>
    <isoform>
        <id>P35379-3</id>
        <name>FSH-R3</name>
        <sequence type="described" ref="VSP_001957 VSP_001958"/>
    </isoform>
    <isoform>
        <id>P35379-4</id>
        <name>FSH-R4</name>
        <sequence type="described" ref="VSP_001955 VSP_001956"/>
    </isoform>
</comment>
<comment type="tissue specificity">
    <text evidence="7">Isoform FSH-R3 is expressed in ovary and testis, but not in kidney (at protein level).</text>
</comment>
<comment type="PTM">
    <text evidence="2">N-glycosylated; indirectly required for FSH-binding, possibly via a conformational change that allows high affinity binding of hormone.</text>
</comment>
<comment type="PTM">
    <text evidence="3">Sulfated.</text>
</comment>
<comment type="similarity">
    <text evidence="5">Belongs to the G-protein coupled receptor 1 family. FSH/LSH/TSH subfamily.</text>
</comment>
<keyword id="KW-0025">Alternative splicing</keyword>
<keyword id="KW-1003">Cell membrane</keyword>
<keyword id="KW-1015">Disulfide bond</keyword>
<keyword id="KW-0297">G-protein coupled receptor</keyword>
<keyword id="KW-0325">Glycoprotein</keyword>
<keyword id="KW-0433">Leucine-rich repeat</keyword>
<keyword id="KW-0472">Membrane</keyword>
<keyword id="KW-0675">Receptor</keyword>
<keyword id="KW-1185">Reference proteome</keyword>
<keyword id="KW-0677">Repeat</keyword>
<keyword id="KW-0732">Signal</keyword>
<keyword id="KW-0765">Sulfation</keyword>
<keyword id="KW-0807">Transducer</keyword>
<keyword id="KW-0812">Transmembrane</keyword>
<keyword id="KW-1133">Transmembrane helix</keyword>
<accession>P35379</accession>
<accession>Q28573</accession>
<accession>Q28574</accession>
<accession>Q9TSI9</accession>
<name>FSHR_SHEEP</name>
<feature type="signal peptide" evidence="4">
    <location>
        <begin position="1"/>
        <end position="17"/>
    </location>
</feature>
<feature type="chain" id="PRO_0000012776" description="Follicle-stimulating hormone receptor">
    <location>
        <begin position="18"/>
        <end position="695"/>
    </location>
</feature>
<feature type="topological domain" description="Extracellular" evidence="4">
    <location>
        <begin position="18"/>
        <end position="366"/>
    </location>
</feature>
<feature type="transmembrane region" description="Helical; Name=1" evidence="4">
    <location>
        <begin position="367"/>
        <end position="387"/>
    </location>
</feature>
<feature type="topological domain" description="Cytoplasmic" evidence="4">
    <location>
        <begin position="388"/>
        <end position="398"/>
    </location>
</feature>
<feature type="transmembrane region" description="Helical; Name=2" evidence="4">
    <location>
        <begin position="399"/>
        <end position="421"/>
    </location>
</feature>
<feature type="topological domain" description="Extracellular" evidence="4">
    <location>
        <begin position="422"/>
        <end position="443"/>
    </location>
</feature>
<feature type="transmembrane region" description="Helical; Name=3" evidence="4">
    <location>
        <begin position="444"/>
        <end position="465"/>
    </location>
</feature>
<feature type="topological domain" description="Cytoplasmic" evidence="4">
    <location>
        <begin position="466"/>
        <end position="485"/>
    </location>
</feature>
<feature type="transmembrane region" description="Helical; Name=4" evidence="4">
    <location>
        <begin position="486"/>
        <end position="508"/>
    </location>
</feature>
<feature type="topological domain" description="Extracellular" evidence="4">
    <location>
        <begin position="509"/>
        <end position="528"/>
    </location>
</feature>
<feature type="transmembrane region" description="Helical; Name=5" evidence="4">
    <location>
        <begin position="529"/>
        <end position="550"/>
    </location>
</feature>
<feature type="topological domain" description="Cytoplasmic" evidence="4">
    <location>
        <begin position="551"/>
        <end position="573"/>
    </location>
</feature>
<feature type="transmembrane region" description="Helical; Name=6" evidence="4">
    <location>
        <begin position="574"/>
        <end position="597"/>
    </location>
</feature>
<feature type="topological domain" description="Extracellular" evidence="4">
    <location>
        <begin position="598"/>
        <end position="608"/>
    </location>
</feature>
<feature type="transmembrane region" description="Helical; Name=7" evidence="4">
    <location>
        <begin position="609"/>
        <end position="630"/>
    </location>
</feature>
<feature type="topological domain" description="Cytoplasmic" evidence="4">
    <location>
        <begin position="631"/>
        <end position="695"/>
    </location>
</feature>
<feature type="domain" description="LRRNT">
    <location>
        <begin position="18"/>
        <end position="46"/>
    </location>
</feature>
<feature type="repeat" description="LRR 1">
    <location>
        <begin position="48"/>
        <end position="70"/>
    </location>
</feature>
<feature type="repeat" description="LRR 2">
    <location>
        <begin position="71"/>
        <end position="93"/>
    </location>
</feature>
<feature type="repeat" description="LRR 3">
    <location>
        <begin position="96"/>
        <end position="118"/>
    </location>
</feature>
<feature type="repeat" description="LRR 4">
    <location>
        <begin position="121"/>
        <end position="142"/>
    </location>
</feature>
<feature type="repeat" description="LRR 5">
    <location>
        <begin position="143"/>
        <end position="167"/>
    </location>
</feature>
<feature type="repeat" description="LRR 6">
    <location>
        <begin position="171"/>
        <end position="192"/>
    </location>
</feature>
<feature type="repeat" description="LRR 7">
    <location>
        <begin position="194"/>
        <end position="216"/>
    </location>
</feature>
<feature type="repeat" description="LRR 8">
    <location>
        <begin position="219"/>
        <end position="239"/>
    </location>
</feature>
<feature type="repeat" description="LRR 9">
    <location>
        <begin position="240"/>
        <end position="262"/>
    </location>
</feature>
<feature type="modified residue" description="Sulfotyrosine" evidence="3">
    <location>
        <position position="335"/>
    </location>
</feature>
<feature type="glycosylation site" description="N-linked (GlcNAc...) asparagine" evidence="1">
    <location>
        <position position="191"/>
    </location>
</feature>
<feature type="glycosylation site" description="N-linked (GlcNAc...) asparagine" evidence="4">
    <location>
        <position position="199"/>
    </location>
</feature>
<feature type="glycosylation site" description="N-linked (GlcNAc...) asparagine" evidence="1">
    <location>
        <position position="293"/>
    </location>
</feature>
<feature type="disulfide bond" evidence="5">
    <location>
        <begin position="18"/>
        <end position="25"/>
    </location>
</feature>
<feature type="disulfide bond" evidence="5">
    <location>
        <begin position="23"/>
        <end position="32"/>
    </location>
</feature>
<feature type="disulfide bond" evidence="3">
    <location>
        <begin position="275"/>
        <end position="346"/>
    </location>
</feature>
<feature type="disulfide bond" evidence="3">
    <location>
        <begin position="276"/>
        <end position="356"/>
    </location>
</feature>
<feature type="disulfide bond" evidence="3">
    <location>
        <begin position="276"/>
        <end position="292"/>
    </location>
</feature>
<feature type="disulfide bond" evidence="3">
    <location>
        <begin position="292"/>
        <end position="338"/>
    </location>
</feature>
<feature type="disulfide bond" evidence="5">
    <location>
        <begin position="442"/>
        <end position="517"/>
    </location>
</feature>
<feature type="splice variant" id="VSP_001955" description="In isoform FSH-R4." evidence="8">
    <original>LISNTGIK</original>
    <variation>FKRWRNRI</variation>
    <location>
        <begin position="126"/>
        <end position="133"/>
    </location>
</feature>
<feature type="splice variant" id="VSP_001956" description="In isoform FSH-R4." evidence="8">
    <location>
        <begin position="135"/>
        <end position="695"/>
    </location>
</feature>
<feature type="splice variant" id="VSP_001957" description="In isoform FSH-R3." evidence="8">
    <original>DISRTRIRSLPSYGLENLKKLRAKSTYHLKKLPSLE</original>
    <variation>SPLLHCWAHLQSFFFVVCGQREHISEFGLKSKQHPN</variation>
    <location>
        <begin position="224"/>
        <end position="259"/>
    </location>
</feature>
<feature type="splice variant" id="VSP_001958" description="In isoform FSH-R3." evidence="8">
    <location>
        <begin position="260"/>
        <end position="695"/>
    </location>
</feature>
<feature type="splice variant" id="VSP_001959" description="In isoform FSH-R2." evidence="9">
    <original>KFGCYEVQAQTYRSETSFTAHNFHPRNG</original>
    <variation>LHCCTVGLICNHFSSLFVARGNIFLNLD</variation>
    <location>
        <begin position="643"/>
        <end position="670"/>
    </location>
</feature>
<feature type="splice variant" id="VSP_001960" description="In isoform FSH-R2." evidence="9">
    <location>
        <begin position="671"/>
        <end position="695"/>
    </location>
</feature>
<sequence length="695" mass="78238">MALFLVALLAFLSLGSGCHHRLCHCSNGVFLCQDSKVTEMPSDLPRDAVELRFVLTKLRVIPEGAFSGFGDLEKIEISQNDVLEVIEANVFSNLPKLHEIRIEKANNLLYIDPDAFQNLPNLRYLLISNTGIKHLPAVHKIQSLQKVLLDIQDNINIHTVERNSFMGLSFESMIVWLSKNGIQEIHNCAFNGTQLDELNLSDNSNLEELPNDVFQGASGPVILDISRTRIRSLPSYGLENLKKLRAKSTYHLKKLPSLEKFVTLVEASLTYPSHCCAFANWRRQTSDLHPICNKSILRQEVDDMTQARGQRISLAEDDEPSYAKGFDMMYSEFDYDLCSEVVDVTCSPEPDAFNPCEDIMGYDILRVLIWFISILAITGNILVLVILITSQYKLTVPRFLMCNLAFADLCIGIYLLLIASVDVHTKSQYHNYAIDWQTGAGCDAAGFFTVFASELSVYTLTAITLERWHTITHAMQLECKVHVRHAASIMLVGWVFAFAVALFPIFGISSYMKVSICLPMDIDSPLSQLYVMSLLVLNVLAFVVICGCYTHIYLTVRNPNITSSSSDTKIAKRMAMLIFTDFLCMAPISFFAISASLKVPLITVSKSKILLVLFYPINSCANPFLYAIFTRNFRRDFFILLSKFGCYEVQAQTYRSETSFTAHNFHPRNGHCPPAPRVTNGSNYTLIPLRHLAKN</sequence>
<organism>
    <name type="scientific">Ovis aries</name>
    <name type="common">Sheep</name>
    <dbReference type="NCBI Taxonomy" id="9940"/>
    <lineage>
        <taxon>Eukaryota</taxon>
        <taxon>Metazoa</taxon>
        <taxon>Chordata</taxon>
        <taxon>Craniata</taxon>
        <taxon>Vertebrata</taxon>
        <taxon>Euteleostomi</taxon>
        <taxon>Mammalia</taxon>
        <taxon>Eutheria</taxon>
        <taxon>Laurasiatheria</taxon>
        <taxon>Artiodactyla</taxon>
        <taxon>Ruminantia</taxon>
        <taxon>Pecora</taxon>
        <taxon>Bovidae</taxon>
        <taxon>Caprinae</taxon>
        <taxon>Ovis</taxon>
    </lineage>
</organism>
<gene>
    <name type="primary">FSHR</name>
</gene>
<proteinExistence type="evidence at protein level"/>
<protein>
    <recommendedName>
        <fullName>Follicle-stimulating hormone receptor</fullName>
        <shortName>FSH-R</shortName>
    </recommendedName>
    <alternativeName>
        <fullName>Follitropin receptor</fullName>
    </alternativeName>
</protein>
<dbReference type="EMBL" id="L07302">
    <property type="protein sequence ID" value="AAA31525.1"/>
    <property type="molecule type" value="mRNA"/>
</dbReference>
<dbReference type="EMBL" id="L12766">
    <property type="protein sequence ID" value="AAA31523.1"/>
    <property type="molecule type" value="mRNA"/>
</dbReference>
<dbReference type="EMBL" id="L12767">
    <property type="protein sequence ID" value="AAA31524.1"/>
    <property type="molecule type" value="mRNA"/>
</dbReference>
<dbReference type="EMBL" id="L36115">
    <property type="protein sequence ID" value="AAK70667.1"/>
    <property type="molecule type" value="mRNA"/>
</dbReference>
<dbReference type="EMBL" id="AJ131735">
    <property type="protein sequence ID" value="CAA10495.1"/>
    <property type="molecule type" value="Genomic_DNA"/>
</dbReference>
<dbReference type="EMBL" id="AF090438">
    <property type="protein sequence ID" value="AAC61749.1"/>
    <property type="molecule type" value="Genomic_DNA"/>
</dbReference>
<dbReference type="PIR" id="JC1493">
    <property type="entry name" value="JC1493"/>
</dbReference>
<dbReference type="RefSeq" id="NP_001009289.1">
    <molecule id="P35379-1"/>
    <property type="nucleotide sequence ID" value="NM_001009289.1"/>
</dbReference>
<dbReference type="SMR" id="P35379"/>
<dbReference type="STRING" id="9940.ENSOARP00000004647"/>
<dbReference type="GlyCosmos" id="P35379">
    <property type="glycosylation" value="3 sites, No reported glycans"/>
</dbReference>
<dbReference type="PaxDb" id="9940-ENSOARP00000004647"/>
<dbReference type="GeneID" id="443299"/>
<dbReference type="KEGG" id="oas:443299"/>
<dbReference type="CTD" id="2492"/>
<dbReference type="eggNOG" id="KOG2087">
    <property type="taxonomic scope" value="Eukaryota"/>
</dbReference>
<dbReference type="OrthoDB" id="5981530at2759"/>
<dbReference type="Proteomes" id="UP000002356">
    <property type="component" value="Unplaced"/>
</dbReference>
<dbReference type="GO" id="GO:0016020">
    <property type="term" value="C:membrane"/>
    <property type="evidence" value="ECO:0000250"/>
    <property type="project" value="UniProtKB"/>
</dbReference>
<dbReference type="GO" id="GO:0005886">
    <property type="term" value="C:plasma membrane"/>
    <property type="evidence" value="ECO:0000314"/>
    <property type="project" value="UniProtKB"/>
</dbReference>
<dbReference type="GO" id="GO:0043235">
    <property type="term" value="C:receptor complex"/>
    <property type="evidence" value="ECO:0000250"/>
    <property type="project" value="UniProtKB"/>
</dbReference>
<dbReference type="GO" id="GO:0004963">
    <property type="term" value="F:follicle-stimulating hormone receptor activity"/>
    <property type="evidence" value="ECO:0000315"/>
    <property type="project" value="UniProtKB"/>
</dbReference>
<dbReference type="GO" id="GO:0008528">
    <property type="term" value="F:G protein-coupled peptide receptor activity"/>
    <property type="evidence" value="ECO:0007669"/>
    <property type="project" value="TreeGrafter"/>
</dbReference>
<dbReference type="GO" id="GO:0007189">
    <property type="term" value="P:adenylate cyclase-activating G protein-coupled receptor signaling pathway"/>
    <property type="evidence" value="ECO:0007669"/>
    <property type="project" value="TreeGrafter"/>
</dbReference>
<dbReference type="GO" id="GO:0071372">
    <property type="term" value="P:cellular response to follicle-stimulating hormone stimulus"/>
    <property type="evidence" value="ECO:0000315"/>
    <property type="project" value="UniProtKB"/>
</dbReference>
<dbReference type="GO" id="GO:0042699">
    <property type="term" value="P:follicle-stimulating hormone signaling pathway"/>
    <property type="evidence" value="ECO:0000315"/>
    <property type="project" value="UniProtKB"/>
</dbReference>
<dbReference type="GO" id="GO:0007186">
    <property type="term" value="P:G protein-coupled receptor signaling pathway"/>
    <property type="evidence" value="ECO:0000250"/>
    <property type="project" value="UniProtKB"/>
</dbReference>
<dbReference type="GO" id="GO:0009755">
    <property type="term" value="P:hormone-mediated signaling pathway"/>
    <property type="evidence" value="ECO:0007669"/>
    <property type="project" value="TreeGrafter"/>
</dbReference>
<dbReference type="GO" id="GO:0008584">
    <property type="term" value="P:male gonad development"/>
    <property type="evidence" value="ECO:0007669"/>
    <property type="project" value="TreeGrafter"/>
</dbReference>
<dbReference type="GO" id="GO:0045762">
    <property type="term" value="P:positive regulation of adenylate cyclase activity"/>
    <property type="evidence" value="ECO:0000315"/>
    <property type="project" value="UniProtKB"/>
</dbReference>
<dbReference type="GO" id="GO:0050850">
    <property type="term" value="P:positive regulation of calcium-mediated signaling"/>
    <property type="evidence" value="ECO:0000315"/>
    <property type="project" value="UniProtKB"/>
</dbReference>
<dbReference type="GO" id="GO:0070374">
    <property type="term" value="P:positive regulation of ERK1 and ERK2 cascade"/>
    <property type="evidence" value="ECO:0000250"/>
    <property type="project" value="UniProtKB"/>
</dbReference>
<dbReference type="GO" id="GO:0051897">
    <property type="term" value="P:positive regulation of phosphatidylinositol 3-kinase/protein kinase B signal transduction"/>
    <property type="evidence" value="ECO:0000250"/>
    <property type="project" value="UniProtKB"/>
</dbReference>
<dbReference type="GO" id="GO:0010738">
    <property type="term" value="P:regulation of protein kinase A signaling"/>
    <property type="evidence" value="ECO:0000250"/>
    <property type="project" value="UniProtKB"/>
</dbReference>
<dbReference type="CDD" id="cd15360">
    <property type="entry name" value="7tmA_FSH-R"/>
    <property type="match status" value="1"/>
</dbReference>
<dbReference type="FunFam" id="1.20.1070.10:FF:000019">
    <property type="entry name" value="Lutropin-choriogonadotropic hormone receptor"/>
    <property type="match status" value="1"/>
</dbReference>
<dbReference type="Gene3D" id="1.20.1070.10">
    <property type="entry name" value="Rhodopsin 7-helix transmembrane proteins"/>
    <property type="match status" value="1"/>
</dbReference>
<dbReference type="Gene3D" id="3.80.10.10">
    <property type="entry name" value="Ribonuclease Inhibitor"/>
    <property type="match status" value="1"/>
</dbReference>
<dbReference type="InterPro" id="IPR002272">
    <property type="entry name" value="FSH_rcpt"/>
</dbReference>
<dbReference type="InterPro" id="IPR024635">
    <property type="entry name" value="GnHR_TM"/>
</dbReference>
<dbReference type="InterPro" id="IPR000276">
    <property type="entry name" value="GPCR_Rhodpsn"/>
</dbReference>
<dbReference type="InterPro" id="IPR017452">
    <property type="entry name" value="GPCR_Rhodpsn_7TM"/>
</dbReference>
<dbReference type="InterPro" id="IPR002131">
    <property type="entry name" value="Gphrmn_rcpt_fam"/>
</dbReference>
<dbReference type="InterPro" id="IPR026906">
    <property type="entry name" value="LRR_5"/>
</dbReference>
<dbReference type="InterPro" id="IPR032675">
    <property type="entry name" value="LRR_dom_sf"/>
</dbReference>
<dbReference type="InterPro" id="IPR000372">
    <property type="entry name" value="LRRNT"/>
</dbReference>
<dbReference type="PANTHER" id="PTHR24372:SF5">
    <property type="entry name" value="FOLLICLE-STIMULATING HORMONE RECEPTOR"/>
    <property type="match status" value="1"/>
</dbReference>
<dbReference type="PANTHER" id="PTHR24372">
    <property type="entry name" value="GLYCOPROTEIN HORMONE RECEPTOR"/>
    <property type="match status" value="1"/>
</dbReference>
<dbReference type="Pfam" id="PF00001">
    <property type="entry name" value="7tm_1"/>
    <property type="match status" value="1"/>
</dbReference>
<dbReference type="Pfam" id="PF12369">
    <property type="entry name" value="GnHR_trans"/>
    <property type="match status" value="1"/>
</dbReference>
<dbReference type="Pfam" id="PF13306">
    <property type="entry name" value="LRR_5"/>
    <property type="match status" value="2"/>
</dbReference>
<dbReference type="PRINTS" id="PR01143">
    <property type="entry name" value="FSHRECEPTOR"/>
</dbReference>
<dbReference type="PRINTS" id="PR00373">
    <property type="entry name" value="GLYCHORMONER"/>
</dbReference>
<dbReference type="PRINTS" id="PR00237">
    <property type="entry name" value="GPCRRHODOPSN"/>
</dbReference>
<dbReference type="SMART" id="SM00013">
    <property type="entry name" value="LRRNT"/>
    <property type="match status" value="1"/>
</dbReference>
<dbReference type="SUPFAM" id="SSF81321">
    <property type="entry name" value="Family A G protein-coupled receptor-like"/>
    <property type="match status" value="1"/>
</dbReference>
<dbReference type="SUPFAM" id="SSF52058">
    <property type="entry name" value="L domain-like"/>
    <property type="match status" value="1"/>
</dbReference>
<dbReference type="PROSITE" id="PS00237">
    <property type="entry name" value="G_PROTEIN_RECEP_F1_1"/>
    <property type="match status" value="1"/>
</dbReference>
<dbReference type="PROSITE" id="PS50262">
    <property type="entry name" value="G_PROTEIN_RECEP_F1_2"/>
    <property type="match status" value="1"/>
</dbReference>